<name>GSA_LEPBP</name>
<protein>
    <recommendedName>
        <fullName evidence="1">Glutamate-1-semialdehyde 2,1-aminomutase</fullName>
        <shortName evidence="1">GSA</shortName>
        <ecNumber evidence="1">5.4.3.8</ecNumber>
    </recommendedName>
    <alternativeName>
        <fullName evidence="1">Glutamate-1-semialdehyde aminotransferase</fullName>
        <shortName evidence="1">GSA-AT</shortName>
    </alternativeName>
</protein>
<keyword id="KW-0963">Cytoplasm</keyword>
<keyword id="KW-0413">Isomerase</keyword>
<keyword id="KW-0627">Porphyrin biosynthesis</keyword>
<keyword id="KW-0663">Pyridoxal phosphate</keyword>
<keyword id="KW-1185">Reference proteome</keyword>
<comment type="catalytic activity">
    <reaction evidence="1">
        <text>(S)-4-amino-5-oxopentanoate = 5-aminolevulinate</text>
        <dbReference type="Rhea" id="RHEA:14265"/>
        <dbReference type="ChEBI" id="CHEBI:57501"/>
        <dbReference type="ChEBI" id="CHEBI:356416"/>
        <dbReference type="EC" id="5.4.3.8"/>
    </reaction>
</comment>
<comment type="cofactor">
    <cofactor evidence="1">
        <name>pyridoxal 5'-phosphate</name>
        <dbReference type="ChEBI" id="CHEBI:597326"/>
    </cofactor>
</comment>
<comment type="pathway">
    <text evidence="1">Porphyrin-containing compound metabolism; protoporphyrin-IX biosynthesis; 5-aminolevulinate from L-glutamyl-tRNA(Glu): step 2/2.</text>
</comment>
<comment type="subunit">
    <text evidence="1">Homodimer.</text>
</comment>
<comment type="subcellular location">
    <subcellularLocation>
        <location evidence="1">Cytoplasm</location>
    </subcellularLocation>
</comment>
<comment type="similarity">
    <text evidence="1">Belongs to the class-III pyridoxal-phosphate-dependent aminotransferase family. HemL subfamily.</text>
</comment>
<dbReference type="EC" id="5.4.3.8" evidence="1"/>
<dbReference type="EMBL" id="CP000786">
    <property type="protein sequence ID" value="ABZ97284.1"/>
    <property type="molecule type" value="Genomic_DNA"/>
</dbReference>
<dbReference type="RefSeq" id="WP_012388165.1">
    <property type="nucleotide sequence ID" value="NC_010602.1"/>
</dbReference>
<dbReference type="SMR" id="B0SNK3"/>
<dbReference type="STRING" id="456481.LEPBI_I1168"/>
<dbReference type="KEGG" id="lbi:LEPBI_I1168"/>
<dbReference type="HOGENOM" id="CLU_016922_1_5_12"/>
<dbReference type="OrthoDB" id="9807885at2"/>
<dbReference type="BioCyc" id="LBIF456481:LEPBI_RS05730-MONOMER"/>
<dbReference type="UniPathway" id="UPA00251">
    <property type="reaction ID" value="UER00317"/>
</dbReference>
<dbReference type="Proteomes" id="UP000001847">
    <property type="component" value="Chromosome I"/>
</dbReference>
<dbReference type="GO" id="GO:0005737">
    <property type="term" value="C:cytoplasm"/>
    <property type="evidence" value="ECO:0007669"/>
    <property type="project" value="UniProtKB-SubCell"/>
</dbReference>
<dbReference type="GO" id="GO:0042286">
    <property type="term" value="F:glutamate-1-semialdehyde 2,1-aminomutase activity"/>
    <property type="evidence" value="ECO:0007669"/>
    <property type="project" value="UniProtKB-UniRule"/>
</dbReference>
<dbReference type="GO" id="GO:0030170">
    <property type="term" value="F:pyridoxal phosphate binding"/>
    <property type="evidence" value="ECO:0007669"/>
    <property type="project" value="InterPro"/>
</dbReference>
<dbReference type="GO" id="GO:0008483">
    <property type="term" value="F:transaminase activity"/>
    <property type="evidence" value="ECO:0007669"/>
    <property type="project" value="InterPro"/>
</dbReference>
<dbReference type="GO" id="GO:0006782">
    <property type="term" value="P:protoporphyrinogen IX biosynthetic process"/>
    <property type="evidence" value="ECO:0007669"/>
    <property type="project" value="UniProtKB-UniRule"/>
</dbReference>
<dbReference type="CDD" id="cd00610">
    <property type="entry name" value="OAT_like"/>
    <property type="match status" value="1"/>
</dbReference>
<dbReference type="FunFam" id="3.40.640.10:FF:000021">
    <property type="entry name" value="Glutamate-1-semialdehyde 2,1-aminomutase"/>
    <property type="match status" value="1"/>
</dbReference>
<dbReference type="Gene3D" id="3.90.1150.10">
    <property type="entry name" value="Aspartate Aminotransferase, domain 1"/>
    <property type="match status" value="1"/>
</dbReference>
<dbReference type="Gene3D" id="3.40.640.10">
    <property type="entry name" value="Type I PLP-dependent aspartate aminotransferase-like (Major domain)"/>
    <property type="match status" value="1"/>
</dbReference>
<dbReference type="HAMAP" id="MF_00375">
    <property type="entry name" value="HemL_aminotrans_3"/>
    <property type="match status" value="1"/>
</dbReference>
<dbReference type="InterPro" id="IPR004639">
    <property type="entry name" value="4pyrrol_synth_GluAld_NH2Trfase"/>
</dbReference>
<dbReference type="InterPro" id="IPR005814">
    <property type="entry name" value="Aminotrans_3"/>
</dbReference>
<dbReference type="InterPro" id="IPR049704">
    <property type="entry name" value="Aminotrans_3_PPA_site"/>
</dbReference>
<dbReference type="InterPro" id="IPR015424">
    <property type="entry name" value="PyrdxlP-dep_Trfase"/>
</dbReference>
<dbReference type="InterPro" id="IPR015421">
    <property type="entry name" value="PyrdxlP-dep_Trfase_major"/>
</dbReference>
<dbReference type="InterPro" id="IPR015422">
    <property type="entry name" value="PyrdxlP-dep_Trfase_small"/>
</dbReference>
<dbReference type="NCBIfam" id="NF000818">
    <property type="entry name" value="PRK00062.1"/>
    <property type="match status" value="1"/>
</dbReference>
<dbReference type="PANTHER" id="PTHR43713">
    <property type="entry name" value="GLUTAMATE-1-SEMIALDEHYDE 2,1-AMINOMUTASE"/>
    <property type="match status" value="1"/>
</dbReference>
<dbReference type="PANTHER" id="PTHR43713:SF3">
    <property type="entry name" value="GLUTAMATE-1-SEMIALDEHYDE 2,1-AMINOMUTASE 1, CHLOROPLASTIC-RELATED"/>
    <property type="match status" value="1"/>
</dbReference>
<dbReference type="Pfam" id="PF00202">
    <property type="entry name" value="Aminotran_3"/>
    <property type="match status" value="1"/>
</dbReference>
<dbReference type="SUPFAM" id="SSF53383">
    <property type="entry name" value="PLP-dependent transferases"/>
    <property type="match status" value="1"/>
</dbReference>
<dbReference type="PROSITE" id="PS00600">
    <property type="entry name" value="AA_TRANSFER_CLASS_3"/>
    <property type="match status" value="1"/>
</dbReference>
<proteinExistence type="inferred from homology"/>
<evidence type="ECO:0000255" key="1">
    <source>
        <dbReference type="HAMAP-Rule" id="MF_00375"/>
    </source>
</evidence>
<sequence>MNSETLFQRSKQVVPGGVHSPVRSFSSVGGTPIFFSEARGAYLKSVEGNDFIDYCLSFGPLLFGHRHPEIQEVVEDTVNKAWSFGACEPYSLELAEFITERIPWVEKIRFVNSGTEAVMSALRVARAATGRNKILKFDGCYHGHLDQLLVKSGSGLAGLSSSDSKGIGPEIIQNTLVLPLDDESKLEELFQREGSNIACLAIEPLPANYGLLPQRIEFLKKCRELTTKYGVLLLFDEVISGFRVSFQGMAGITGIIPDLVCYGKIIGGGFPVGAYAGKRELMDLVAPSGPVYQAGTLSANPIGMRAGLKTLTKAWTENPYPALESATKQLTDGILTLLSEKGDTNWEAVTFGSLFWLKGKTENPIRRIDQIPGTHKSNFATLFHKLLKQGVYLAPSGYEVGFLSTAHTNDIINLTLEKTKKALKD</sequence>
<gene>
    <name evidence="1" type="primary">hemL</name>
    <name type="ordered locus">LEPBI_I1168</name>
</gene>
<accession>B0SNK3</accession>
<organism>
    <name type="scientific">Leptospira biflexa serovar Patoc (strain Patoc 1 / ATCC 23582 / Paris)</name>
    <dbReference type="NCBI Taxonomy" id="456481"/>
    <lineage>
        <taxon>Bacteria</taxon>
        <taxon>Pseudomonadati</taxon>
        <taxon>Spirochaetota</taxon>
        <taxon>Spirochaetia</taxon>
        <taxon>Leptospirales</taxon>
        <taxon>Leptospiraceae</taxon>
        <taxon>Leptospira</taxon>
    </lineage>
</organism>
<feature type="chain" id="PRO_0000382327" description="Glutamate-1-semialdehyde 2,1-aminomutase">
    <location>
        <begin position="1"/>
        <end position="425"/>
    </location>
</feature>
<feature type="modified residue" description="N6-(pyridoxal phosphate)lysine" evidence="1">
    <location>
        <position position="264"/>
    </location>
</feature>
<reference key="1">
    <citation type="journal article" date="2008" name="PLoS ONE">
        <title>Genome sequence of the saprophyte Leptospira biflexa provides insights into the evolution of Leptospira and the pathogenesis of leptospirosis.</title>
        <authorList>
            <person name="Picardeau M."/>
            <person name="Bulach D.M."/>
            <person name="Bouchier C."/>
            <person name="Zuerner R.L."/>
            <person name="Zidane N."/>
            <person name="Wilson P.J."/>
            <person name="Creno S."/>
            <person name="Kuczek E.S."/>
            <person name="Bommezzadri S."/>
            <person name="Davis J.C."/>
            <person name="McGrath A."/>
            <person name="Johnson M.J."/>
            <person name="Boursaux-Eude C."/>
            <person name="Seemann T."/>
            <person name="Rouy Z."/>
            <person name="Coppel R.L."/>
            <person name="Rood J.I."/>
            <person name="Lajus A."/>
            <person name="Davies J.K."/>
            <person name="Medigue C."/>
            <person name="Adler B."/>
        </authorList>
    </citation>
    <scope>NUCLEOTIDE SEQUENCE [LARGE SCALE GENOMIC DNA]</scope>
    <source>
        <strain>Patoc 1 / ATCC 23582 / Paris</strain>
    </source>
</reference>